<organism>
    <name type="scientific">Helicobacter pylori (strain J99 / ATCC 700824)</name>
    <name type="common">Campylobacter pylori J99</name>
    <dbReference type="NCBI Taxonomy" id="85963"/>
    <lineage>
        <taxon>Bacteria</taxon>
        <taxon>Pseudomonadati</taxon>
        <taxon>Campylobacterota</taxon>
        <taxon>Epsilonproteobacteria</taxon>
        <taxon>Campylobacterales</taxon>
        <taxon>Helicobacteraceae</taxon>
        <taxon>Helicobacter</taxon>
    </lineage>
</organism>
<proteinExistence type="inferred from homology"/>
<accession>Q9ZMG9</accession>
<evidence type="ECO:0000250" key="1">
    <source>
        <dbReference type="UniProtKB" id="Q59712"/>
    </source>
</evidence>
<evidence type="ECO:0000305" key="2"/>
<name>PYRX_HELPJ</name>
<gene>
    <name type="primary">pyrC'</name>
    <name type="ordered locus">jhp_0251</name>
</gene>
<feature type="chain" id="PRO_0000147288" description="Probable dihydroorotase-like protein">
    <location>
        <begin position="1"/>
        <end position="378"/>
    </location>
</feature>
<protein>
    <recommendedName>
        <fullName>Probable dihydroorotase-like protein</fullName>
    </recommendedName>
    <alternativeName>
        <fullName>Aspartate carbamoyltransferase 42 kDa non-catalytic chain</fullName>
    </alternativeName>
</protein>
<dbReference type="EMBL" id="AE001439">
    <property type="protein sequence ID" value="AAD05827.1"/>
    <property type="molecule type" value="Genomic_DNA"/>
</dbReference>
<dbReference type="PIR" id="E71956">
    <property type="entry name" value="E71956"/>
</dbReference>
<dbReference type="RefSeq" id="WP_000924871.1">
    <property type="nucleotide sequence ID" value="NC_000921.1"/>
</dbReference>
<dbReference type="SMR" id="Q9ZMG9"/>
<dbReference type="KEGG" id="hpj:jhp_0251"/>
<dbReference type="PATRIC" id="fig|85963.30.peg.763"/>
<dbReference type="eggNOG" id="COG0044">
    <property type="taxonomic scope" value="Bacteria"/>
</dbReference>
<dbReference type="Proteomes" id="UP000000804">
    <property type="component" value="Chromosome"/>
</dbReference>
<dbReference type="GO" id="GO:0005737">
    <property type="term" value="C:cytoplasm"/>
    <property type="evidence" value="ECO:0007669"/>
    <property type="project" value="TreeGrafter"/>
</dbReference>
<dbReference type="GO" id="GO:0004038">
    <property type="term" value="F:allantoinase activity"/>
    <property type="evidence" value="ECO:0007669"/>
    <property type="project" value="TreeGrafter"/>
</dbReference>
<dbReference type="GO" id="GO:0006145">
    <property type="term" value="P:purine nucleobase catabolic process"/>
    <property type="evidence" value="ECO:0007669"/>
    <property type="project" value="TreeGrafter"/>
</dbReference>
<dbReference type="GO" id="GO:0006221">
    <property type="term" value="P:pyrimidine nucleotide biosynthetic process"/>
    <property type="evidence" value="ECO:0007669"/>
    <property type="project" value="UniProtKB-KW"/>
</dbReference>
<dbReference type="Gene3D" id="3.20.20.140">
    <property type="entry name" value="Metal-dependent hydrolases"/>
    <property type="match status" value="2"/>
</dbReference>
<dbReference type="Gene3D" id="2.30.40.10">
    <property type="entry name" value="Urease, subunit C, domain 1"/>
    <property type="match status" value="1"/>
</dbReference>
<dbReference type="InterPro" id="IPR006680">
    <property type="entry name" value="Amidohydro-rel"/>
</dbReference>
<dbReference type="InterPro" id="IPR050138">
    <property type="entry name" value="DHOase/Allantoinase_Hydrolase"/>
</dbReference>
<dbReference type="InterPro" id="IPR011059">
    <property type="entry name" value="Metal-dep_hydrolase_composite"/>
</dbReference>
<dbReference type="InterPro" id="IPR032466">
    <property type="entry name" value="Metal_Hydrolase"/>
</dbReference>
<dbReference type="PANTHER" id="PTHR43668">
    <property type="entry name" value="ALLANTOINASE"/>
    <property type="match status" value="1"/>
</dbReference>
<dbReference type="PANTHER" id="PTHR43668:SF2">
    <property type="entry name" value="ALLANTOINASE"/>
    <property type="match status" value="1"/>
</dbReference>
<dbReference type="Pfam" id="PF01979">
    <property type="entry name" value="Amidohydro_1"/>
    <property type="match status" value="1"/>
</dbReference>
<dbReference type="SUPFAM" id="SSF51338">
    <property type="entry name" value="Composite domain of metallo-dependent hydrolases"/>
    <property type="match status" value="1"/>
</dbReference>
<dbReference type="SUPFAM" id="SSF51556">
    <property type="entry name" value="Metallo-dependent hydrolases"/>
    <property type="match status" value="1"/>
</dbReference>
<reference key="1">
    <citation type="journal article" date="1999" name="Nature">
        <title>Genomic sequence comparison of two unrelated isolates of the human gastric pathogen Helicobacter pylori.</title>
        <authorList>
            <person name="Alm R.A."/>
            <person name="Ling L.-S.L."/>
            <person name="Moir D.T."/>
            <person name="King B.L."/>
            <person name="Brown E.D."/>
            <person name="Doig P.C."/>
            <person name="Smith D.R."/>
            <person name="Noonan B."/>
            <person name="Guild B.C."/>
            <person name="deJonge B.L."/>
            <person name="Carmel G."/>
            <person name="Tummino P.J."/>
            <person name="Caruso A."/>
            <person name="Uria-Nickelsen M."/>
            <person name="Mills D.M."/>
            <person name="Ives C."/>
            <person name="Gibson R."/>
            <person name="Merberg D."/>
            <person name="Mills S.D."/>
            <person name="Jiang Q."/>
            <person name="Taylor D.E."/>
            <person name="Vovis G.F."/>
            <person name="Trust T.J."/>
        </authorList>
    </citation>
    <scope>NUCLEOTIDE SEQUENCE [LARGE SCALE GENOMIC DNA]</scope>
    <source>
        <strain>J99 / ATCC 700824</strain>
    </source>
</reference>
<comment type="function">
    <text evidence="1">Non-functional DHOase.</text>
</comment>
<comment type="similarity">
    <text evidence="2">Belongs to the metallo-dependent hydrolases superfamily. DHOase family. PyrC' subfamily.</text>
</comment>
<sequence length="378" mass="42244">MLLKNASFYDDEVLKRADIRLKDSLIIEIEENLSPTNNEEVVECEDLFVLPSFIDLSVTNLEGYENLKQKAFKGGVGLLNVFNGDQSGIKNIMAIKNNQLADIATLKNKGGEILIAPSDAFLELISHYAKSYNLPLLISLENSFEALNSGALAYELGQNFVDNAFENTRLVRFMEVSRALQIPVLLDKVNSIATLKLIKAFNDLGAKLQAQTPLSHLILDESVYEDYEPRFKIAPPLRDKEGQNALKEALKNNEIAMLTSLHASKNSNAQLFEESAFGCESIEDAFSVAYTFLVQKKVISFQQLIKVMTINQAKFLKLNAGEVKENQLANLMIVDLNAQTRVSNQNSPFYGLELYGEVQRMILKGQTTFIKENACKKS</sequence>
<keyword id="KW-0665">Pyrimidine biosynthesis</keyword>